<comment type="function">
    <text evidence="3">Variant histone H3 which replaces conventional H3 in a wide range of nucleosomes in active genes. Constitutes the predominant form of histone H3 in non-dividing cells and is incorporated into chromatin independently of DNA synthesis. Deposited at sites of nucleosomal displacement throughout transcribed genes, suggesting that it represents an epigenetic imprint of transcriptionally active chromatin. Nucleosomes wrap and compact DNA into chromatin, limiting DNA accessibility to the cellular machineries which require DNA as a template. Histones thereby play a central role in transcription regulation, DNA repair, DNA replication and chromosomal stability. DNA accessibility is regulated via a complex set of post-translational modifications of histones, also called histone code, and nucleosome remodeling.</text>
</comment>
<comment type="subunit">
    <text>The nucleosome is a histone octamer containing two molecules each of H2A, H2B, H3 and H4 assembled in one H3-H4 heterotetramer and two H2A-H2B heterodimers. The octamer wraps approximately 147 bp of DNA.</text>
</comment>
<comment type="subcellular location">
    <subcellularLocation>
        <location evidence="3">Nucleus</location>
    </subcellularLocation>
    <subcellularLocation>
        <location evidence="3">Chromosome</location>
    </subcellularLocation>
    <text>Depleted from the meiotically silenced X chromosome.</text>
</comment>
<comment type="tissue specificity">
    <text evidence="3">Highly expressed in nearly all larval and adult nuclei. Expressed only at low levels in intestine. Expressed throughout all stages of gametogenesis.</text>
</comment>
<comment type="developmental stage">
    <text evidence="3">Present at all embryonic stages (at protein level).</text>
</comment>
<comment type="PTM">
    <text evidence="1">Acetylation is generally linked to gene activation.</text>
</comment>
<comment type="PTM">
    <text evidence="1">Methylation at Lys-5 is linked to gene activation. Methylation at Lys-10 is linked to gene repression (By similarity).</text>
</comment>
<comment type="similarity">
    <text evidence="4">Belongs to the histone H3 family.</text>
</comment>
<sequence length="136" mass="15360">MARTKQTARKSTGGKAPRKQLATKAARKSAPTTGGVKKPHRYRPGTVALREIRRYQKSTELLIRKLPFQRLVREIAQDFKTDLRFQSAAIGALQEASEAYLVGLFEDTNLCAIHAKRVTIMPKDMQLARRIRGERA</sequence>
<gene>
    <name type="primary">his-72</name>
    <name type="ORF">Y49E10.6</name>
</gene>
<reference key="1">
    <citation type="journal article" date="1998" name="Science">
        <title>Genome sequence of the nematode C. elegans: a platform for investigating biology.</title>
        <authorList>
            <consortium name="The C. elegans sequencing consortium"/>
        </authorList>
    </citation>
    <scope>NUCLEOTIDE SEQUENCE [LARGE SCALE GENOMIC DNA]</scope>
    <source>
        <strain>Bristol N2</strain>
    </source>
</reference>
<reference key="2">
    <citation type="journal article" date="2006" name="PLoS Genet.">
        <title>Histone H3.3 variant dynamics in the germline of Caenorhabditis elegans.</title>
        <authorList>
            <person name="Ooi S.L."/>
            <person name="Priess J.R."/>
            <person name="Henikoff S."/>
        </authorList>
    </citation>
    <scope>FUNCTION</scope>
    <scope>TISSUE SPECIFICITY</scope>
    <scope>DEVELOPMENTAL STAGE</scope>
    <scope>SUBCELLULAR LOCATION</scope>
</reference>
<feature type="initiator methionine" description="Removed" evidence="1">
    <location>
        <position position="1"/>
    </location>
</feature>
<feature type="chain" id="PRO_0000268632" description="Histone H3.3 type 2">
    <location>
        <begin position="2"/>
        <end position="136"/>
    </location>
</feature>
<feature type="region of interest" description="Disordered" evidence="2">
    <location>
        <begin position="1"/>
        <end position="43"/>
    </location>
</feature>
<feature type="modified residue" description="N6,N6,N6-trimethyllysine; alternate" evidence="1">
    <location>
        <position position="5"/>
    </location>
</feature>
<feature type="modified residue" description="N6,N6-dimethyllysine; alternate" evidence="1">
    <location>
        <position position="5"/>
    </location>
</feature>
<feature type="modified residue" description="N6-acetyllysine; alternate" evidence="1">
    <location>
        <position position="5"/>
    </location>
</feature>
<feature type="modified residue" description="N6-methyllysine; alternate" evidence="1">
    <location>
        <position position="5"/>
    </location>
</feature>
<feature type="modified residue" description="N6,N6,N6-trimethyllysine; alternate" evidence="1">
    <location>
        <position position="10"/>
    </location>
</feature>
<feature type="modified residue" description="N6,N6-dimethyllysine; alternate" evidence="1">
    <location>
        <position position="10"/>
    </location>
</feature>
<feature type="modified residue" description="N6-acetyllysine; alternate" evidence="1">
    <location>
        <position position="10"/>
    </location>
</feature>
<feature type="modified residue" description="Phosphoserine" evidence="1">
    <location>
        <position position="11"/>
    </location>
</feature>
<feature type="modified residue" description="N6-acetyllysine" evidence="1">
    <location>
        <position position="15"/>
    </location>
</feature>
<feature type="modified residue" description="N6-acetyllysine" evidence="1">
    <location>
        <position position="24"/>
    </location>
</feature>
<feature type="modified residue" description="N6,N6,N6-trimethyllysine; alternate" evidence="1">
    <location>
        <position position="28"/>
    </location>
</feature>
<feature type="modified residue" description="N6,N6-dimethyllysine; alternate" evidence="1">
    <location>
        <position position="28"/>
    </location>
</feature>
<feature type="modified residue" description="N6-methyllysine; alternate" evidence="1">
    <location>
        <position position="28"/>
    </location>
</feature>
<feature type="modified residue" description="Phosphoserine" evidence="1">
    <location>
        <position position="29"/>
    </location>
</feature>
<feature type="modified residue" description="N6,N6,N6-trimethyllysine; alternate" evidence="1">
    <location>
        <position position="37"/>
    </location>
</feature>
<feature type="modified residue" description="N6-methyllysine; alternate" evidence="1">
    <location>
        <position position="37"/>
    </location>
</feature>
<feature type="modified residue" description="N6-methyllysine" evidence="1">
    <location>
        <position position="80"/>
    </location>
</feature>
<organism>
    <name type="scientific">Caenorhabditis elegans</name>
    <dbReference type="NCBI Taxonomy" id="6239"/>
    <lineage>
        <taxon>Eukaryota</taxon>
        <taxon>Metazoa</taxon>
        <taxon>Ecdysozoa</taxon>
        <taxon>Nematoda</taxon>
        <taxon>Chromadorea</taxon>
        <taxon>Rhabditida</taxon>
        <taxon>Rhabditina</taxon>
        <taxon>Rhabditomorpha</taxon>
        <taxon>Rhabditoidea</taxon>
        <taxon>Rhabditidae</taxon>
        <taxon>Peloderinae</taxon>
        <taxon>Caenorhabditis</taxon>
    </lineage>
</organism>
<accession>Q9U281</accession>
<dbReference type="EMBL" id="Z98866">
    <property type="protein sequence ID" value="CAB11546.1"/>
    <property type="molecule type" value="Genomic_DNA"/>
</dbReference>
<dbReference type="PIR" id="T27037">
    <property type="entry name" value="T27037"/>
</dbReference>
<dbReference type="RefSeq" id="NP_001255163.1">
    <property type="nucleotide sequence ID" value="NM_001268234.5"/>
</dbReference>
<dbReference type="SMR" id="Q9U281"/>
<dbReference type="BioGRID" id="41839">
    <property type="interactions" value="3"/>
</dbReference>
<dbReference type="DIP" id="DIP-26716N"/>
<dbReference type="FunCoup" id="Q9U281">
    <property type="interactions" value="3187"/>
</dbReference>
<dbReference type="IntAct" id="Q9U281">
    <property type="interactions" value="1"/>
</dbReference>
<dbReference type="PeptideAtlas" id="Q9U281"/>
<dbReference type="EnsemblMetazoa" id="Y49E10.6a.1">
    <property type="protein sequence ID" value="Y49E10.6a.1"/>
    <property type="gene ID" value="WBGene00001946"/>
</dbReference>
<dbReference type="GeneID" id="176660"/>
<dbReference type="KEGG" id="cel:CELE_Y49E10.6"/>
<dbReference type="UCSC" id="Y49E10.6.2">
    <property type="organism name" value="c. elegans"/>
</dbReference>
<dbReference type="AGR" id="WB:WBGene00001946"/>
<dbReference type="CTD" id="176660"/>
<dbReference type="WormBase" id="Y49E10.6a">
    <property type="protein sequence ID" value="CE22223"/>
    <property type="gene ID" value="WBGene00001946"/>
    <property type="gene designation" value="his-72"/>
</dbReference>
<dbReference type="HOGENOM" id="CLU_078295_4_0_1"/>
<dbReference type="InParanoid" id="Q9U281"/>
<dbReference type="OrthoDB" id="10564979at2759"/>
<dbReference type="PhylomeDB" id="Q9U281"/>
<dbReference type="PRO" id="PR:Q9U281"/>
<dbReference type="Proteomes" id="UP000001940">
    <property type="component" value="Chromosome III"/>
</dbReference>
<dbReference type="Bgee" id="WBGene00001946">
    <property type="expression patterns" value="Expressed in embryo and 4 other cell types or tissues"/>
</dbReference>
<dbReference type="ExpressionAtlas" id="Q9U281">
    <property type="expression patterns" value="baseline and differential"/>
</dbReference>
<dbReference type="GO" id="GO:0000786">
    <property type="term" value="C:nucleosome"/>
    <property type="evidence" value="ECO:0000314"/>
    <property type="project" value="WormBase"/>
</dbReference>
<dbReference type="GO" id="GO:0005634">
    <property type="term" value="C:nucleus"/>
    <property type="evidence" value="ECO:0000314"/>
    <property type="project" value="WormBase"/>
</dbReference>
<dbReference type="GO" id="GO:0003677">
    <property type="term" value="F:DNA binding"/>
    <property type="evidence" value="ECO:0007669"/>
    <property type="project" value="UniProtKB-KW"/>
</dbReference>
<dbReference type="GO" id="GO:0046982">
    <property type="term" value="F:protein heterodimerization activity"/>
    <property type="evidence" value="ECO:0007669"/>
    <property type="project" value="InterPro"/>
</dbReference>
<dbReference type="GO" id="GO:0030527">
    <property type="term" value="F:structural constituent of chromatin"/>
    <property type="evidence" value="ECO:0007669"/>
    <property type="project" value="InterPro"/>
</dbReference>
<dbReference type="CDD" id="cd22911">
    <property type="entry name" value="HFD_H3"/>
    <property type="match status" value="1"/>
</dbReference>
<dbReference type="FunFam" id="1.10.20.10:FF:000078">
    <property type="entry name" value="Histone H3"/>
    <property type="match status" value="1"/>
</dbReference>
<dbReference type="FunFam" id="1.10.20.10:FF:000044">
    <property type="entry name" value="Histone H3.3"/>
    <property type="match status" value="1"/>
</dbReference>
<dbReference type="Gene3D" id="1.10.20.10">
    <property type="entry name" value="Histone, subunit A"/>
    <property type="match status" value="1"/>
</dbReference>
<dbReference type="InterPro" id="IPR009072">
    <property type="entry name" value="Histone-fold"/>
</dbReference>
<dbReference type="InterPro" id="IPR007125">
    <property type="entry name" value="Histone_H2A/H2B/H3"/>
</dbReference>
<dbReference type="InterPro" id="IPR000164">
    <property type="entry name" value="Histone_H3/CENP-A"/>
</dbReference>
<dbReference type="PANTHER" id="PTHR11426">
    <property type="entry name" value="HISTONE H3"/>
    <property type="match status" value="1"/>
</dbReference>
<dbReference type="Pfam" id="PF00125">
    <property type="entry name" value="Histone"/>
    <property type="match status" value="1"/>
</dbReference>
<dbReference type="PRINTS" id="PR00622">
    <property type="entry name" value="HISTONEH3"/>
</dbReference>
<dbReference type="SMART" id="SM00428">
    <property type="entry name" value="H3"/>
    <property type="match status" value="1"/>
</dbReference>
<dbReference type="SUPFAM" id="SSF47113">
    <property type="entry name" value="Histone-fold"/>
    <property type="match status" value="1"/>
</dbReference>
<dbReference type="PROSITE" id="PS00322">
    <property type="entry name" value="HISTONE_H3_1"/>
    <property type="match status" value="1"/>
</dbReference>
<dbReference type="PROSITE" id="PS00959">
    <property type="entry name" value="HISTONE_H3_2"/>
    <property type="match status" value="1"/>
</dbReference>
<name>H332_CAEEL</name>
<evidence type="ECO:0000250" key="1"/>
<evidence type="ECO:0000256" key="2">
    <source>
        <dbReference type="SAM" id="MobiDB-lite"/>
    </source>
</evidence>
<evidence type="ECO:0000269" key="3">
    <source>
    </source>
</evidence>
<evidence type="ECO:0000305" key="4"/>
<protein>
    <recommendedName>
        <fullName>Histone H3.3 type 2</fullName>
    </recommendedName>
</protein>
<proteinExistence type="evidence at protein level"/>
<keyword id="KW-0007">Acetylation</keyword>
<keyword id="KW-0158">Chromosome</keyword>
<keyword id="KW-0238">DNA-binding</keyword>
<keyword id="KW-0488">Methylation</keyword>
<keyword id="KW-0544">Nucleosome core</keyword>
<keyword id="KW-0539">Nucleus</keyword>
<keyword id="KW-0597">Phosphoprotein</keyword>
<keyword id="KW-1185">Reference proteome</keyword>